<reference key="1">
    <citation type="journal article" date="2006" name="J. Bacteriol.">
        <title>Genome sequence of Aeromonas hydrophila ATCC 7966T: jack of all trades.</title>
        <authorList>
            <person name="Seshadri R."/>
            <person name="Joseph S.W."/>
            <person name="Chopra A.K."/>
            <person name="Sha J."/>
            <person name="Shaw J."/>
            <person name="Graf J."/>
            <person name="Haft D.H."/>
            <person name="Wu M."/>
            <person name="Ren Q."/>
            <person name="Rosovitz M.J."/>
            <person name="Madupu R."/>
            <person name="Tallon L."/>
            <person name="Kim M."/>
            <person name="Jin S."/>
            <person name="Vuong H."/>
            <person name="Stine O.C."/>
            <person name="Ali A."/>
            <person name="Horneman A.J."/>
            <person name="Heidelberg J.F."/>
        </authorList>
    </citation>
    <scope>NUCLEOTIDE SEQUENCE [LARGE SCALE GENOMIC DNA]</scope>
    <source>
        <strain>ATCC 7966 / DSM 30187 / BCRC 13018 / CCUG 14551 / JCM 1027 / KCTC 2358 / NCIMB 9240 / NCTC 8049</strain>
    </source>
</reference>
<name>ACSA_AERHH</name>
<gene>
    <name evidence="1" type="primary">acsA</name>
    <name type="ordered locus">AHA_3344</name>
</gene>
<organism>
    <name type="scientific">Aeromonas hydrophila subsp. hydrophila (strain ATCC 7966 / DSM 30187 / BCRC 13018 / CCUG 14551 / JCM 1027 / KCTC 2358 / NCIMB 9240 / NCTC 8049)</name>
    <dbReference type="NCBI Taxonomy" id="380703"/>
    <lineage>
        <taxon>Bacteria</taxon>
        <taxon>Pseudomonadati</taxon>
        <taxon>Pseudomonadota</taxon>
        <taxon>Gammaproteobacteria</taxon>
        <taxon>Aeromonadales</taxon>
        <taxon>Aeromonadaceae</taxon>
        <taxon>Aeromonas</taxon>
    </lineage>
</organism>
<comment type="function">
    <text evidence="1">Catalyzes the conversion of acetate into acetyl-CoA (AcCoA), an essential intermediate at the junction of anabolic and catabolic pathways. AcsA undergoes a two-step reaction. In the first half reaction, AcsA combines acetate with ATP to form acetyl-adenylate (AcAMP) intermediate. In the second half reaction, it can then transfer the acetyl group from AcAMP to the sulfhydryl group of CoA, forming the product AcCoA.</text>
</comment>
<comment type="catalytic activity">
    <reaction evidence="1">
        <text>acetate + ATP + CoA = acetyl-CoA + AMP + diphosphate</text>
        <dbReference type="Rhea" id="RHEA:23176"/>
        <dbReference type="ChEBI" id="CHEBI:30089"/>
        <dbReference type="ChEBI" id="CHEBI:30616"/>
        <dbReference type="ChEBI" id="CHEBI:33019"/>
        <dbReference type="ChEBI" id="CHEBI:57287"/>
        <dbReference type="ChEBI" id="CHEBI:57288"/>
        <dbReference type="ChEBI" id="CHEBI:456215"/>
        <dbReference type="EC" id="6.2.1.1"/>
    </reaction>
</comment>
<comment type="cofactor">
    <cofactor evidence="1">
        <name>Mg(2+)</name>
        <dbReference type="ChEBI" id="CHEBI:18420"/>
    </cofactor>
</comment>
<comment type="PTM">
    <text evidence="1">Acetylated. Deacetylation by the SIR2-homolog deacetylase activates the enzyme.</text>
</comment>
<comment type="similarity">
    <text evidence="1">Belongs to the ATP-dependent AMP-binding enzyme family.</text>
</comment>
<evidence type="ECO:0000255" key="1">
    <source>
        <dbReference type="HAMAP-Rule" id="MF_01123"/>
    </source>
</evidence>
<sequence>MSESKVYPVKAHISNGALLDKAGYEAMYRASVQDPDAFWGEQGKILDWMKPYTRVKNTSYDPGHVSIKWYEDGLLNVSANCLDRHLAQRGDKVAIIWEGDNPAEDRKLTYRELHTEVCKFANVLKAQGVHRGDVVCLYMPMVPEAAIAMLACTRIGAVHSIVFGGFSPEALAGRIIDSGSSIVITADEGLRGGRPVPLKKNVDEALTNPETKVNNVIVLKRTGGNIAWHNHRDIWWHDAVATVSADCPPEAMGAEDPLFILYTSGSTGKPKGVLHTTGGYLVYATLTFKYIFDYHEEDIYWCTADVGWVTGHSYLVYGPLANGATTIMFEGVPNYPATNRMSQVVDKHQVSILYTAPTAIRALMAKGNEAVADTSRSSLRIMGSVGEPINPEAWEWYYRTIGEERCPIVDTWWQTETGGILISPLPGVTDLKPGSATRPFFGVQPALVDNMGEPLEGATEGNLVITDSWPGQMRTVFGDHERFEQTYFSTFPGRYFTGDGARRDEDGYYWITGRVDDVLNVSGHRMGTAEIESALVSHPKIAEAAVVGVPHEIKGQGIYAYVTLIAGEEPSRELHKEVKEWVRKEIGAIATPDVIHWAEGLPKTRSGKIMRRILRKIATGETDSLGDISTLADPGVVDKLIREKSEAA</sequence>
<keyword id="KW-0007">Acetylation</keyword>
<keyword id="KW-0067">ATP-binding</keyword>
<keyword id="KW-0436">Ligase</keyword>
<keyword id="KW-0460">Magnesium</keyword>
<keyword id="KW-0479">Metal-binding</keyword>
<keyword id="KW-0547">Nucleotide-binding</keyword>
<keyword id="KW-1185">Reference proteome</keyword>
<dbReference type="EC" id="6.2.1.1" evidence="1"/>
<dbReference type="EMBL" id="CP000462">
    <property type="protein sequence ID" value="ABK37083.1"/>
    <property type="molecule type" value="Genomic_DNA"/>
</dbReference>
<dbReference type="RefSeq" id="WP_011707110.1">
    <property type="nucleotide sequence ID" value="NC_008570.1"/>
</dbReference>
<dbReference type="RefSeq" id="YP_857833.1">
    <property type="nucleotide sequence ID" value="NC_008570.1"/>
</dbReference>
<dbReference type="SMR" id="A0KNI2"/>
<dbReference type="STRING" id="380703.AHA_3344"/>
<dbReference type="EnsemblBacteria" id="ABK37083">
    <property type="protein sequence ID" value="ABK37083"/>
    <property type="gene ID" value="AHA_3344"/>
</dbReference>
<dbReference type="GeneID" id="4490124"/>
<dbReference type="KEGG" id="aha:AHA_3344"/>
<dbReference type="PATRIC" id="fig|380703.7.peg.3340"/>
<dbReference type="eggNOG" id="COG0365">
    <property type="taxonomic scope" value="Bacteria"/>
</dbReference>
<dbReference type="HOGENOM" id="CLU_000022_3_6_6"/>
<dbReference type="OrthoDB" id="9803968at2"/>
<dbReference type="Proteomes" id="UP000000756">
    <property type="component" value="Chromosome"/>
</dbReference>
<dbReference type="GO" id="GO:0005829">
    <property type="term" value="C:cytosol"/>
    <property type="evidence" value="ECO:0007669"/>
    <property type="project" value="TreeGrafter"/>
</dbReference>
<dbReference type="GO" id="GO:0003987">
    <property type="term" value="F:acetate-CoA ligase activity"/>
    <property type="evidence" value="ECO:0007669"/>
    <property type="project" value="UniProtKB-UniRule"/>
</dbReference>
<dbReference type="GO" id="GO:0016208">
    <property type="term" value="F:AMP binding"/>
    <property type="evidence" value="ECO:0007669"/>
    <property type="project" value="InterPro"/>
</dbReference>
<dbReference type="GO" id="GO:0005524">
    <property type="term" value="F:ATP binding"/>
    <property type="evidence" value="ECO:0007669"/>
    <property type="project" value="UniProtKB-KW"/>
</dbReference>
<dbReference type="GO" id="GO:0046872">
    <property type="term" value="F:metal ion binding"/>
    <property type="evidence" value="ECO:0007669"/>
    <property type="project" value="UniProtKB-KW"/>
</dbReference>
<dbReference type="GO" id="GO:0019427">
    <property type="term" value="P:acetyl-CoA biosynthetic process from acetate"/>
    <property type="evidence" value="ECO:0007669"/>
    <property type="project" value="InterPro"/>
</dbReference>
<dbReference type="CDD" id="cd05966">
    <property type="entry name" value="ACS"/>
    <property type="match status" value="1"/>
</dbReference>
<dbReference type="FunFam" id="3.30.300.30:FF:000004">
    <property type="entry name" value="Acetyl-coenzyme A synthetase"/>
    <property type="match status" value="1"/>
</dbReference>
<dbReference type="FunFam" id="3.40.50.12780:FF:000001">
    <property type="entry name" value="Acetyl-coenzyme A synthetase"/>
    <property type="match status" value="1"/>
</dbReference>
<dbReference type="Gene3D" id="3.30.300.30">
    <property type="match status" value="1"/>
</dbReference>
<dbReference type="Gene3D" id="3.40.50.12780">
    <property type="entry name" value="N-terminal domain of ligase-like"/>
    <property type="match status" value="1"/>
</dbReference>
<dbReference type="HAMAP" id="MF_01123">
    <property type="entry name" value="Ac_CoA_synth"/>
    <property type="match status" value="1"/>
</dbReference>
<dbReference type="InterPro" id="IPR011904">
    <property type="entry name" value="Ac_CoA_lig"/>
</dbReference>
<dbReference type="InterPro" id="IPR032387">
    <property type="entry name" value="ACAS_N"/>
</dbReference>
<dbReference type="InterPro" id="IPR025110">
    <property type="entry name" value="AMP-bd_C"/>
</dbReference>
<dbReference type="InterPro" id="IPR045851">
    <property type="entry name" value="AMP-bd_C_sf"/>
</dbReference>
<dbReference type="InterPro" id="IPR020845">
    <property type="entry name" value="AMP-binding_CS"/>
</dbReference>
<dbReference type="InterPro" id="IPR000873">
    <property type="entry name" value="AMP-dep_synth/lig_dom"/>
</dbReference>
<dbReference type="InterPro" id="IPR042099">
    <property type="entry name" value="ANL_N_sf"/>
</dbReference>
<dbReference type="NCBIfam" id="TIGR02188">
    <property type="entry name" value="Ac_CoA_lig_AcsA"/>
    <property type="match status" value="1"/>
</dbReference>
<dbReference type="NCBIfam" id="NF001208">
    <property type="entry name" value="PRK00174.1"/>
    <property type="match status" value="1"/>
</dbReference>
<dbReference type="PANTHER" id="PTHR24095">
    <property type="entry name" value="ACETYL-COENZYME A SYNTHETASE"/>
    <property type="match status" value="1"/>
</dbReference>
<dbReference type="PANTHER" id="PTHR24095:SF243">
    <property type="entry name" value="ACETYL-COENZYME A SYNTHETASE"/>
    <property type="match status" value="1"/>
</dbReference>
<dbReference type="Pfam" id="PF16177">
    <property type="entry name" value="ACAS_N"/>
    <property type="match status" value="1"/>
</dbReference>
<dbReference type="Pfam" id="PF00501">
    <property type="entry name" value="AMP-binding"/>
    <property type="match status" value="1"/>
</dbReference>
<dbReference type="Pfam" id="PF13193">
    <property type="entry name" value="AMP-binding_C"/>
    <property type="match status" value="1"/>
</dbReference>
<dbReference type="SUPFAM" id="SSF56801">
    <property type="entry name" value="Acetyl-CoA synthetase-like"/>
    <property type="match status" value="1"/>
</dbReference>
<dbReference type="PROSITE" id="PS00455">
    <property type="entry name" value="AMP_BINDING"/>
    <property type="match status" value="1"/>
</dbReference>
<proteinExistence type="inferred from homology"/>
<accession>A0KNI2</accession>
<protein>
    <recommendedName>
        <fullName evidence="1">Acetyl-coenzyme A synthetase</fullName>
        <shortName evidence="1">AcCoA synthetase</shortName>
        <shortName evidence="1">Acs</shortName>
        <ecNumber evidence="1">6.2.1.1</ecNumber>
    </recommendedName>
    <alternativeName>
        <fullName evidence="1">Acetate--CoA ligase</fullName>
    </alternativeName>
    <alternativeName>
        <fullName evidence="1">Acyl-activating enzyme</fullName>
    </alternativeName>
</protein>
<feature type="chain" id="PRO_1000065265" description="Acetyl-coenzyme A synthetase">
    <location>
        <begin position="1"/>
        <end position="648"/>
    </location>
</feature>
<feature type="binding site" evidence="1">
    <location>
        <begin position="191"/>
        <end position="194"/>
    </location>
    <ligand>
        <name>CoA</name>
        <dbReference type="ChEBI" id="CHEBI:57287"/>
    </ligand>
</feature>
<feature type="binding site" evidence="1">
    <location>
        <position position="310"/>
    </location>
    <ligand>
        <name>CoA</name>
        <dbReference type="ChEBI" id="CHEBI:57287"/>
    </ligand>
</feature>
<feature type="binding site" evidence="1">
    <location>
        <position position="334"/>
    </location>
    <ligand>
        <name>CoA</name>
        <dbReference type="ChEBI" id="CHEBI:57287"/>
    </ligand>
</feature>
<feature type="binding site" evidence="1">
    <location>
        <begin position="386"/>
        <end position="388"/>
    </location>
    <ligand>
        <name>ATP</name>
        <dbReference type="ChEBI" id="CHEBI:30616"/>
    </ligand>
</feature>
<feature type="binding site" evidence="1">
    <location>
        <begin position="410"/>
        <end position="415"/>
    </location>
    <ligand>
        <name>ATP</name>
        <dbReference type="ChEBI" id="CHEBI:30616"/>
    </ligand>
</feature>
<feature type="binding site" evidence="1">
    <location>
        <position position="499"/>
    </location>
    <ligand>
        <name>ATP</name>
        <dbReference type="ChEBI" id="CHEBI:30616"/>
    </ligand>
</feature>
<feature type="binding site" evidence="1">
    <location>
        <position position="514"/>
    </location>
    <ligand>
        <name>ATP</name>
        <dbReference type="ChEBI" id="CHEBI:30616"/>
    </ligand>
</feature>
<feature type="binding site" evidence="1">
    <location>
        <position position="522"/>
    </location>
    <ligand>
        <name>CoA</name>
        <dbReference type="ChEBI" id="CHEBI:57287"/>
    </ligand>
</feature>
<feature type="binding site" evidence="1">
    <location>
        <position position="525"/>
    </location>
    <ligand>
        <name>ATP</name>
        <dbReference type="ChEBI" id="CHEBI:30616"/>
    </ligand>
</feature>
<feature type="binding site" evidence="1">
    <location>
        <position position="536"/>
    </location>
    <ligand>
        <name>Mg(2+)</name>
        <dbReference type="ChEBI" id="CHEBI:18420"/>
    </ligand>
</feature>
<feature type="binding site" evidence="1">
    <location>
        <position position="538"/>
    </location>
    <ligand>
        <name>Mg(2+)</name>
        <dbReference type="ChEBI" id="CHEBI:18420"/>
    </ligand>
</feature>
<feature type="binding site" evidence="1">
    <location>
        <position position="541"/>
    </location>
    <ligand>
        <name>Mg(2+)</name>
        <dbReference type="ChEBI" id="CHEBI:18420"/>
    </ligand>
</feature>
<feature type="binding site">
    <location>
        <position position="583"/>
    </location>
    <ligand>
        <name>CoA</name>
        <dbReference type="ChEBI" id="CHEBI:57287"/>
    </ligand>
</feature>
<feature type="modified residue" description="N6-acetyllysine" evidence="1">
    <location>
        <position position="608"/>
    </location>
</feature>